<name>YMXG_BACSU</name>
<evidence type="ECO:0000250" key="1"/>
<evidence type="ECO:0000255" key="2">
    <source>
        <dbReference type="PROSITE-ProRule" id="PRU10096"/>
    </source>
</evidence>
<evidence type="ECO:0000305" key="3"/>
<accession>Q04805</accession>
<feature type="chain" id="PRO_0000074420" description="Uncharacterized zinc protease YmxG">
    <location>
        <begin position="1"/>
        <end position="409"/>
    </location>
</feature>
<feature type="active site" description="Proton acceptor" evidence="2">
    <location>
        <position position="49"/>
    </location>
</feature>
<feature type="binding site" evidence="2">
    <location>
        <position position="46"/>
    </location>
    <ligand>
        <name>Zn(2+)</name>
        <dbReference type="ChEBI" id="CHEBI:29105"/>
    </ligand>
</feature>
<feature type="binding site" evidence="2">
    <location>
        <position position="50"/>
    </location>
    <ligand>
        <name>Zn(2+)</name>
        <dbReference type="ChEBI" id="CHEBI:29105"/>
    </ligand>
</feature>
<feature type="binding site" evidence="2">
    <location>
        <position position="126"/>
    </location>
    <ligand>
        <name>Zn(2+)</name>
        <dbReference type="ChEBI" id="CHEBI:29105"/>
    </ligand>
</feature>
<feature type="sequence conflict" description="In Ref. 1; AAA73485." evidence="3" ref="1">
    <original>Q</original>
    <variation>P</variation>
    <location>
        <position position="8"/>
    </location>
</feature>
<feature type="sequence conflict" description="In Ref. 4; AAA22379." evidence="3" ref="4">
    <original>FQ</original>
    <variation>LE</variation>
    <location>
        <begin position="270"/>
        <end position="271"/>
    </location>
</feature>
<feature type="sequence conflict" description="In Ref. 4; AAA22379." evidence="3" ref="4">
    <original>E</original>
    <variation>Q</variation>
    <location>
        <position position="360"/>
    </location>
</feature>
<reference key="1">
    <citation type="submission" date="1995-05" db="EMBL/GenBank/DDBJ databases">
        <authorList>
            <person name="Bolhuis A."/>
            <person name="Vehmaanpera J."/>
            <person name="Venema G."/>
            <person name="Bron S."/>
            <person name="van Dijl J.M."/>
        </authorList>
    </citation>
    <scope>NUCLEOTIDE SEQUENCE [GENOMIC DNA]</scope>
    <source>
        <strain>168 / 8G5</strain>
    </source>
</reference>
<reference key="2">
    <citation type="journal article" date="1997" name="Nature">
        <title>The complete genome sequence of the Gram-positive bacterium Bacillus subtilis.</title>
        <authorList>
            <person name="Kunst F."/>
            <person name="Ogasawara N."/>
            <person name="Moszer I."/>
            <person name="Albertini A.M."/>
            <person name="Alloni G."/>
            <person name="Azevedo V."/>
            <person name="Bertero M.G."/>
            <person name="Bessieres P."/>
            <person name="Bolotin A."/>
            <person name="Borchert S."/>
            <person name="Borriss R."/>
            <person name="Boursier L."/>
            <person name="Brans A."/>
            <person name="Braun M."/>
            <person name="Brignell S.C."/>
            <person name="Bron S."/>
            <person name="Brouillet S."/>
            <person name="Bruschi C.V."/>
            <person name="Caldwell B."/>
            <person name="Capuano V."/>
            <person name="Carter N.M."/>
            <person name="Choi S.-K."/>
            <person name="Codani J.-J."/>
            <person name="Connerton I.F."/>
            <person name="Cummings N.J."/>
            <person name="Daniel R.A."/>
            <person name="Denizot F."/>
            <person name="Devine K.M."/>
            <person name="Duesterhoeft A."/>
            <person name="Ehrlich S.D."/>
            <person name="Emmerson P.T."/>
            <person name="Entian K.-D."/>
            <person name="Errington J."/>
            <person name="Fabret C."/>
            <person name="Ferrari E."/>
            <person name="Foulger D."/>
            <person name="Fritz C."/>
            <person name="Fujita M."/>
            <person name="Fujita Y."/>
            <person name="Fuma S."/>
            <person name="Galizzi A."/>
            <person name="Galleron N."/>
            <person name="Ghim S.-Y."/>
            <person name="Glaser P."/>
            <person name="Goffeau A."/>
            <person name="Golightly E.J."/>
            <person name="Grandi G."/>
            <person name="Guiseppi G."/>
            <person name="Guy B.J."/>
            <person name="Haga K."/>
            <person name="Haiech J."/>
            <person name="Harwood C.R."/>
            <person name="Henaut A."/>
            <person name="Hilbert H."/>
            <person name="Holsappel S."/>
            <person name="Hosono S."/>
            <person name="Hullo M.-F."/>
            <person name="Itaya M."/>
            <person name="Jones L.-M."/>
            <person name="Joris B."/>
            <person name="Karamata D."/>
            <person name="Kasahara Y."/>
            <person name="Klaerr-Blanchard M."/>
            <person name="Klein C."/>
            <person name="Kobayashi Y."/>
            <person name="Koetter P."/>
            <person name="Koningstein G."/>
            <person name="Krogh S."/>
            <person name="Kumano M."/>
            <person name="Kurita K."/>
            <person name="Lapidus A."/>
            <person name="Lardinois S."/>
            <person name="Lauber J."/>
            <person name="Lazarevic V."/>
            <person name="Lee S.-M."/>
            <person name="Levine A."/>
            <person name="Liu H."/>
            <person name="Masuda S."/>
            <person name="Mauel C."/>
            <person name="Medigue C."/>
            <person name="Medina N."/>
            <person name="Mellado R.P."/>
            <person name="Mizuno M."/>
            <person name="Moestl D."/>
            <person name="Nakai S."/>
            <person name="Noback M."/>
            <person name="Noone D."/>
            <person name="O'Reilly M."/>
            <person name="Ogawa K."/>
            <person name="Ogiwara A."/>
            <person name="Oudega B."/>
            <person name="Park S.-H."/>
            <person name="Parro V."/>
            <person name="Pohl T.M."/>
            <person name="Portetelle D."/>
            <person name="Porwollik S."/>
            <person name="Prescott A.M."/>
            <person name="Presecan E."/>
            <person name="Pujic P."/>
            <person name="Purnelle B."/>
            <person name="Rapoport G."/>
            <person name="Rey M."/>
            <person name="Reynolds S."/>
            <person name="Rieger M."/>
            <person name="Rivolta C."/>
            <person name="Rocha E."/>
            <person name="Roche B."/>
            <person name="Rose M."/>
            <person name="Sadaie Y."/>
            <person name="Sato T."/>
            <person name="Scanlan E."/>
            <person name="Schleich S."/>
            <person name="Schroeter R."/>
            <person name="Scoffone F."/>
            <person name="Sekiguchi J."/>
            <person name="Sekowska A."/>
            <person name="Seror S.J."/>
            <person name="Serror P."/>
            <person name="Shin B.-S."/>
            <person name="Soldo B."/>
            <person name="Sorokin A."/>
            <person name="Tacconi E."/>
            <person name="Takagi T."/>
            <person name="Takahashi H."/>
            <person name="Takemaru K."/>
            <person name="Takeuchi M."/>
            <person name="Tamakoshi A."/>
            <person name="Tanaka T."/>
            <person name="Terpstra P."/>
            <person name="Tognoni A."/>
            <person name="Tosato V."/>
            <person name="Uchiyama S."/>
            <person name="Vandenbol M."/>
            <person name="Vannier F."/>
            <person name="Vassarotti A."/>
            <person name="Viari A."/>
            <person name="Wambutt R."/>
            <person name="Wedler E."/>
            <person name="Wedler H."/>
            <person name="Weitzenegger T."/>
            <person name="Winters P."/>
            <person name="Wipat A."/>
            <person name="Yamamoto H."/>
            <person name="Yamane K."/>
            <person name="Yasumoto K."/>
            <person name="Yata K."/>
            <person name="Yoshida K."/>
            <person name="Yoshikawa H.-F."/>
            <person name="Zumstein E."/>
            <person name="Yoshikawa H."/>
            <person name="Danchin A."/>
        </authorList>
    </citation>
    <scope>NUCLEOTIDE SEQUENCE [LARGE SCALE GENOMIC DNA]</scope>
    <source>
        <strain>168</strain>
    </source>
</reference>
<reference key="3">
    <citation type="journal article" date="2009" name="Microbiology">
        <title>From a consortium sequence to a unified sequence: the Bacillus subtilis 168 reference genome a decade later.</title>
        <authorList>
            <person name="Barbe V."/>
            <person name="Cruveiller S."/>
            <person name="Kunst F."/>
            <person name="Lenoble P."/>
            <person name="Meurice G."/>
            <person name="Sekowska A."/>
            <person name="Vallenet D."/>
            <person name="Wang T."/>
            <person name="Moszer I."/>
            <person name="Medigue C."/>
            <person name="Danchin A."/>
        </authorList>
    </citation>
    <scope>SEQUENCE REVISION TO 8</scope>
</reference>
<reference key="4">
    <citation type="journal article" date="1993" name="J. Biol. Chem.">
        <title>Organization and nucleotide sequence of the Bacillus subtilis diaminopimelate operon, a cluster of genes encoding the first three enzymes of diaminopimelate synthesis and dipicolinate synthase.</title>
        <authorList>
            <person name="Chen N.-Y."/>
            <person name="Jiang S.-Q."/>
            <person name="Klein D.A."/>
            <person name="Paulus H."/>
        </authorList>
    </citation>
    <scope>NUCLEOTIDE SEQUENCE [GENOMIC DNA] OF 30-409</scope>
    <source>
        <strain>168</strain>
    </source>
</reference>
<protein>
    <recommendedName>
        <fullName>Uncharacterized zinc protease YmxG</fullName>
        <ecNumber>3.4.24.-</ecNumber>
    </recommendedName>
    <alternativeName>
        <fullName>ORFP</fullName>
    </alternativeName>
</protein>
<organism>
    <name type="scientific">Bacillus subtilis (strain 168)</name>
    <dbReference type="NCBI Taxonomy" id="224308"/>
    <lineage>
        <taxon>Bacteria</taxon>
        <taxon>Bacillati</taxon>
        <taxon>Bacillota</taxon>
        <taxon>Bacilli</taxon>
        <taxon>Bacillales</taxon>
        <taxon>Bacillaceae</taxon>
        <taxon>Bacillus</taxon>
    </lineage>
</organism>
<gene>
    <name type="primary">ymxG</name>
    <name type="ordered locus">BSU16710</name>
</gene>
<proteinExistence type="inferred from homology"/>
<sequence length="409" mass="45995">MIKRYTCQNGVRIVLENNPTVRSVAIGVWIGTGSRHETPEINGISHFLEHMFFKGTSTKSAREIAESFDRIGGQVNAFTSKEYTCYYAKVLDEHANYALDVLADMFFHSTFDENELKKEKNVVYEEIKMYEDAPDDIVHDLLSKATYGNHSLGYPILGTEETLASFNGDSLRQYMHDYYTPDRVVISVAGNISDSFIKDVEKWFGSYEAKGKATGLEKPEFHTEKLTRKKETEQAHLCLGFKGLEVGHERIYDLIVLNNVLGGSMSSRLFQDVREDKGLAYSVYSYHSSYEDSGMLTIYGGTGANQLQQLSETIQETLATLKRDGITSKELENSKEQMKGSLMLSLESTNSKMSRNGKNELLLGKHKTLDEIINELNAVNLERVNGLARQLFTEDYALALISPSGNMPS</sequence>
<keyword id="KW-0378">Hydrolase</keyword>
<keyword id="KW-0479">Metal-binding</keyword>
<keyword id="KW-0482">Metalloprotease</keyword>
<keyword id="KW-0645">Protease</keyword>
<keyword id="KW-1185">Reference proteome</keyword>
<keyword id="KW-0862">Zinc</keyword>
<dbReference type="EC" id="3.4.24.-"/>
<dbReference type="EMBL" id="U27560">
    <property type="protein sequence ID" value="AAA73485.1"/>
    <property type="molecule type" value="Genomic_DNA"/>
</dbReference>
<dbReference type="EMBL" id="AL009126">
    <property type="protein sequence ID" value="CAB13544.2"/>
    <property type="molecule type" value="Genomic_DNA"/>
</dbReference>
<dbReference type="EMBL" id="L08471">
    <property type="protein sequence ID" value="AAA22379.1"/>
    <property type="molecule type" value="Genomic_DNA"/>
</dbReference>
<dbReference type="PIR" id="E69886">
    <property type="entry name" value="E69886"/>
</dbReference>
<dbReference type="RefSeq" id="WP_003245717.1">
    <property type="nucleotide sequence ID" value="NZ_OZ025638.1"/>
</dbReference>
<dbReference type="SMR" id="Q04805"/>
<dbReference type="FunCoup" id="Q04805">
    <property type="interactions" value="675"/>
</dbReference>
<dbReference type="STRING" id="224308.BSU16710"/>
<dbReference type="MEROPS" id="M16.A15"/>
<dbReference type="PaxDb" id="224308-BSU16710"/>
<dbReference type="EnsemblBacteria" id="CAB13544">
    <property type="protein sequence ID" value="CAB13544"/>
    <property type="gene ID" value="BSU_16710"/>
</dbReference>
<dbReference type="GeneID" id="938456"/>
<dbReference type="KEGG" id="bsu:BSU16710"/>
<dbReference type="PATRIC" id="fig|224308.179.peg.1812"/>
<dbReference type="eggNOG" id="COG0612">
    <property type="taxonomic scope" value="Bacteria"/>
</dbReference>
<dbReference type="InParanoid" id="Q04805"/>
<dbReference type="OrthoDB" id="9811314at2"/>
<dbReference type="PhylomeDB" id="Q04805"/>
<dbReference type="BioCyc" id="BSUB:BSU16710-MONOMER"/>
<dbReference type="Proteomes" id="UP000001570">
    <property type="component" value="Chromosome"/>
</dbReference>
<dbReference type="GO" id="GO:0046872">
    <property type="term" value="F:metal ion binding"/>
    <property type="evidence" value="ECO:0007669"/>
    <property type="project" value="UniProtKB-KW"/>
</dbReference>
<dbReference type="GO" id="GO:0004222">
    <property type="term" value="F:metalloendopeptidase activity"/>
    <property type="evidence" value="ECO:0007669"/>
    <property type="project" value="InterPro"/>
</dbReference>
<dbReference type="GO" id="GO:0006508">
    <property type="term" value="P:proteolysis"/>
    <property type="evidence" value="ECO:0007669"/>
    <property type="project" value="UniProtKB-KW"/>
</dbReference>
<dbReference type="FunFam" id="3.30.830.10:FF:000008">
    <property type="entry name" value="Mitochondrial-processing peptidase subunit beta"/>
    <property type="match status" value="1"/>
</dbReference>
<dbReference type="Gene3D" id="3.30.830.10">
    <property type="entry name" value="Metalloenzyme, LuxS/M16 peptidase-like"/>
    <property type="match status" value="2"/>
</dbReference>
<dbReference type="InterPro" id="IPR011249">
    <property type="entry name" value="Metalloenz_LuxS/M16"/>
</dbReference>
<dbReference type="InterPro" id="IPR050361">
    <property type="entry name" value="MPP/UQCRC_Complex"/>
</dbReference>
<dbReference type="InterPro" id="IPR011765">
    <property type="entry name" value="Pept_M16_N"/>
</dbReference>
<dbReference type="InterPro" id="IPR001431">
    <property type="entry name" value="Pept_M16_Zn_BS"/>
</dbReference>
<dbReference type="InterPro" id="IPR007863">
    <property type="entry name" value="Peptidase_M16_C"/>
</dbReference>
<dbReference type="PANTHER" id="PTHR11851">
    <property type="entry name" value="METALLOPROTEASE"/>
    <property type="match status" value="1"/>
</dbReference>
<dbReference type="PANTHER" id="PTHR11851:SF49">
    <property type="entry name" value="MITOCHONDRIAL-PROCESSING PEPTIDASE SUBUNIT ALPHA"/>
    <property type="match status" value="1"/>
</dbReference>
<dbReference type="Pfam" id="PF00675">
    <property type="entry name" value="Peptidase_M16"/>
    <property type="match status" value="1"/>
</dbReference>
<dbReference type="Pfam" id="PF05193">
    <property type="entry name" value="Peptidase_M16_C"/>
    <property type="match status" value="1"/>
</dbReference>
<dbReference type="SUPFAM" id="SSF63411">
    <property type="entry name" value="LuxS/MPP-like metallohydrolase"/>
    <property type="match status" value="2"/>
</dbReference>
<dbReference type="PROSITE" id="PS00143">
    <property type="entry name" value="INSULINASE"/>
    <property type="match status" value="1"/>
</dbReference>
<comment type="cofactor">
    <cofactor evidence="1">
        <name>Zn(2+)</name>
        <dbReference type="ChEBI" id="CHEBI:29105"/>
    </cofactor>
    <text evidence="1">Binds 1 zinc ion per subunit.</text>
</comment>
<comment type="similarity">
    <text evidence="3">Belongs to the peptidase M16 family.</text>
</comment>